<protein>
    <recommendedName>
        <fullName evidence="1">Bifunctional protein FolD</fullName>
    </recommendedName>
    <domain>
        <recommendedName>
            <fullName evidence="1">Methylenetetrahydrofolate dehydrogenase</fullName>
            <ecNumber evidence="1">1.5.1.5</ecNumber>
        </recommendedName>
    </domain>
    <domain>
        <recommendedName>
            <fullName evidence="1">Methenyltetrahydrofolate cyclohydrolase</fullName>
            <ecNumber evidence="1">3.5.4.9</ecNumber>
        </recommendedName>
    </domain>
</protein>
<organism>
    <name type="scientific">Anoxybacillus flavithermus (strain DSM 21510 / WK1)</name>
    <dbReference type="NCBI Taxonomy" id="491915"/>
    <lineage>
        <taxon>Bacteria</taxon>
        <taxon>Bacillati</taxon>
        <taxon>Bacillota</taxon>
        <taxon>Bacilli</taxon>
        <taxon>Bacillales</taxon>
        <taxon>Anoxybacillaceae</taxon>
        <taxon>Anoxybacillus</taxon>
    </lineage>
</organism>
<evidence type="ECO:0000255" key="1">
    <source>
        <dbReference type="HAMAP-Rule" id="MF_01576"/>
    </source>
</evidence>
<proteinExistence type="inferred from homology"/>
<gene>
    <name evidence="1" type="primary">folD</name>
    <name type="ordered locus">Aflv_0944</name>
</gene>
<name>FOLD_ANOFW</name>
<accession>B7GHF9</accession>
<keyword id="KW-0028">Amino-acid biosynthesis</keyword>
<keyword id="KW-0368">Histidine biosynthesis</keyword>
<keyword id="KW-0378">Hydrolase</keyword>
<keyword id="KW-0486">Methionine biosynthesis</keyword>
<keyword id="KW-0511">Multifunctional enzyme</keyword>
<keyword id="KW-0521">NADP</keyword>
<keyword id="KW-0554">One-carbon metabolism</keyword>
<keyword id="KW-0560">Oxidoreductase</keyword>
<keyword id="KW-0658">Purine biosynthesis</keyword>
<comment type="function">
    <text evidence="1">Catalyzes the oxidation of 5,10-methylenetetrahydrofolate to 5,10-methenyltetrahydrofolate and then the hydrolysis of 5,10-methenyltetrahydrofolate to 10-formyltetrahydrofolate.</text>
</comment>
<comment type="catalytic activity">
    <reaction evidence="1">
        <text>(6R)-5,10-methylene-5,6,7,8-tetrahydrofolate + NADP(+) = (6R)-5,10-methenyltetrahydrofolate + NADPH</text>
        <dbReference type="Rhea" id="RHEA:22812"/>
        <dbReference type="ChEBI" id="CHEBI:15636"/>
        <dbReference type="ChEBI" id="CHEBI:57455"/>
        <dbReference type="ChEBI" id="CHEBI:57783"/>
        <dbReference type="ChEBI" id="CHEBI:58349"/>
        <dbReference type="EC" id="1.5.1.5"/>
    </reaction>
</comment>
<comment type="catalytic activity">
    <reaction evidence="1">
        <text>(6R)-5,10-methenyltetrahydrofolate + H2O = (6R)-10-formyltetrahydrofolate + H(+)</text>
        <dbReference type="Rhea" id="RHEA:23700"/>
        <dbReference type="ChEBI" id="CHEBI:15377"/>
        <dbReference type="ChEBI" id="CHEBI:15378"/>
        <dbReference type="ChEBI" id="CHEBI:57455"/>
        <dbReference type="ChEBI" id="CHEBI:195366"/>
        <dbReference type="EC" id="3.5.4.9"/>
    </reaction>
</comment>
<comment type="pathway">
    <text evidence="1">One-carbon metabolism; tetrahydrofolate interconversion.</text>
</comment>
<comment type="subunit">
    <text evidence="1">Homodimer.</text>
</comment>
<comment type="similarity">
    <text evidence="1">Belongs to the tetrahydrofolate dehydrogenase/cyclohydrolase family.</text>
</comment>
<reference key="1">
    <citation type="journal article" date="2008" name="Genome Biol.">
        <title>Encapsulated in silica: genome, proteome and physiology of the thermophilic bacterium Anoxybacillus flavithermus WK1.</title>
        <authorList>
            <person name="Saw J.H."/>
            <person name="Mountain B.W."/>
            <person name="Feng L."/>
            <person name="Omelchenko M.V."/>
            <person name="Hou S."/>
            <person name="Saito J.A."/>
            <person name="Stott M.B."/>
            <person name="Li D."/>
            <person name="Zhao G."/>
            <person name="Wu J."/>
            <person name="Galperin M.Y."/>
            <person name="Koonin E.V."/>
            <person name="Makarova K.S."/>
            <person name="Wolf Y.I."/>
            <person name="Rigden D.J."/>
            <person name="Dunfield P.F."/>
            <person name="Wang L."/>
            <person name="Alam M."/>
        </authorList>
    </citation>
    <scope>NUCLEOTIDE SEQUENCE [LARGE SCALE GENOMIC DNA]</scope>
    <source>
        <strain>DSM 21510 / WK1</strain>
    </source>
</reference>
<sequence length="283" mass="31127">MAAQIINGFELAKEKRAQLAKEVEQLKREGIEPALAVILVGDHPASQSYVKAKQKACEEIGIRSILLTFPNDISESFLLEQIARLNKDRSIHGILVQLPLPSQINELHVIEAIAPEKDVDGFHPLNVGRMMIGQRAFLPCTPYGILYMVQSLQVDIIGKHVVVVGRSHIVGKPVGQLFLREHATVTYCHSRTNDLEAITRQADILIVAVGKPKLITSSYVKEGAIVIDVGVNRLENGKLCGDVDFDDVKQVASYITPVPKGVGPMTITMLLHNTVQAAREQHK</sequence>
<feature type="chain" id="PRO_1000196751" description="Bifunctional protein FolD">
    <location>
        <begin position="1"/>
        <end position="283"/>
    </location>
</feature>
<feature type="binding site" evidence="1">
    <location>
        <begin position="165"/>
        <end position="167"/>
    </location>
    <ligand>
        <name>NADP(+)</name>
        <dbReference type="ChEBI" id="CHEBI:58349"/>
    </ligand>
</feature>
<feature type="binding site" evidence="1">
    <location>
        <position position="190"/>
    </location>
    <ligand>
        <name>NADP(+)</name>
        <dbReference type="ChEBI" id="CHEBI:58349"/>
    </ligand>
</feature>
<feature type="binding site" evidence="1">
    <location>
        <position position="231"/>
    </location>
    <ligand>
        <name>NADP(+)</name>
        <dbReference type="ChEBI" id="CHEBI:58349"/>
    </ligand>
</feature>
<dbReference type="EC" id="1.5.1.5" evidence="1"/>
<dbReference type="EC" id="3.5.4.9" evidence="1"/>
<dbReference type="EMBL" id="CP000922">
    <property type="protein sequence ID" value="ACJ33320.1"/>
    <property type="molecule type" value="Genomic_DNA"/>
</dbReference>
<dbReference type="RefSeq" id="WP_012574599.1">
    <property type="nucleotide sequence ID" value="NC_011567.1"/>
</dbReference>
<dbReference type="SMR" id="B7GHF9"/>
<dbReference type="STRING" id="491915.Aflv_0944"/>
<dbReference type="GeneID" id="7037201"/>
<dbReference type="KEGG" id="afl:Aflv_0944"/>
<dbReference type="PATRIC" id="fig|491915.6.peg.964"/>
<dbReference type="eggNOG" id="COG0190">
    <property type="taxonomic scope" value="Bacteria"/>
</dbReference>
<dbReference type="HOGENOM" id="CLU_034045_2_1_9"/>
<dbReference type="UniPathway" id="UPA00193"/>
<dbReference type="Proteomes" id="UP000000742">
    <property type="component" value="Chromosome"/>
</dbReference>
<dbReference type="GO" id="GO:0005829">
    <property type="term" value="C:cytosol"/>
    <property type="evidence" value="ECO:0007669"/>
    <property type="project" value="TreeGrafter"/>
</dbReference>
<dbReference type="GO" id="GO:0004477">
    <property type="term" value="F:methenyltetrahydrofolate cyclohydrolase activity"/>
    <property type="evidence" value="ECO:0007669"/>
    <property type="project" value="UniProtKB-UniRule"/>
</dbReference>
<dbReference type="GO" id="GO:0004488">
    <property type="term" value="F:methylenetetrahydrofolate dehydrogenase (NADP+) activity"/>
    <property type="evidence" value="ECO:0007669"/>
    <property type="project" value="UniProtKB-UniRule"/>
</dbReference>
<dbReference type="GO" id="GO:0000105">
    <property type="term" value="P:L-histidine biosynthetic process"/>
    <property type="evidence" value="ECO:0007669"/>
    <property type="project" value="UniProtKB-KW"/>
</dbReference>
<dbReference type="GO" id="GO:0009086">
    <property type="term" value="P:methionine biosynthetic process"/>
    <property type="evidence" value="ECO:0007669"/>
    <property type="project" value="UniProtKB-KW"/>
</dbReference>
<dbReference type="GO" id="GO:0006164">
    <property type="term" value="P:purine nucleotide biosynthetic process"/>
    <property type="evidence" value="ECO:0007669"/>
    <property type="project" value="UniProtKB-KW"/>
</dbReference>
<dbReference type="GO" id="GO:0035999">
    <property type="term" value="P:tetrahydrofolate interconversion"/>
    <property type="evidence" value="ECO:0007669"/>
    <property type="project" value="UniProtKB-UniRule"/>
</dbReference>
<dbReference type="CDD" id="cd01080">
    <property type="entry name" value="NAD_bind_m-THF_DH_Cyclohyd"/>
    <property type="match status" value="1"/>
</dbReference>
<dbReference type="FunFam" id="3.40.50.10860:FF:000001">
    <property type="entry name" value="Bifunctional protein FolD"/>
    <property type="match status" value="1"/>
</dbReference>
<dbReference type="FunFam" id="3.40.50.720:FF:000094">
    <property type="entry name" value="Bifunctional protein FolD"/>
    <property type="match status" value="1"/>
</dbReference>
<dbReference type="Gene3D" id="3.40.50.10860">
    <property type="entry name" value="Leucine Dehydrogenase, chain A, domain 1"/>
    <property type="match status" value="1"/>
</dbReference>
<dbReference type="Gene3D" id="3.40.50.720">
    <property type="entry name" value="NAD(P)-binding Rossmann-like Domain"/>
    <property type="match status" value="1"/>
</dbReference>
<dbReference type="HAMAP" id="MF_01576">
    <property type="entry name" value="THF_DHG_CYH"/>
    <property type="match status" value="1"/>
</dbReference>
<dbReference type="InterPro" id="IPR046346">
    <property type="entry name" value="Aminoacid_DH-like_N_sf"/>
</dbReference>
<dbReference type="InterPro" id="IPR036291">
    <property type="entry name" value="NAD(P)-bd_dom_sf"/>
</dbReference>
<dbReference type="InterPro" id="IPR000672">
    <property type="entry name" value="THF_DH/CycHdrlase"/>
</dbReference>
<dbReference type="InterPro" id="IPR020630">
    <property type="entry name" value="THF_DH/CycHdrlase_cat_dom"/>
</dbReference>
<dbReference type="InterPro" id="IPR020867">
    <property type="entry name" value="THF_DH/CycHdrlase_CS"/>
</dbReference>
<dbReference type="InterPro" id="IPR020631">
    <property type="entry name" value="THF_DH/CycHdrlase_NAD-bd_dom"/>
</dbReference>
<dbReference type="NCBIfam" id="NF008058">
    <property type="entry name" value="PRK10792.1"/>
    <property type="match status" value="1"/>
</dbReference>
<dbReference type="NCBIfam" id="NF010783">
    <property type="entry name" value="PRK14186.1"/>
    <property type="match status" value="1"/>
</dbReference>
<dbReference type="PANTHER" id="PTHR48099:SF5">
    <property type="entry name" value="C-1-TETRAHYDROFOLATE SYNTHASE, CYTOPLASMIC"/>
    <property type="match status" value="1"/>
</dbReference>
<dbReference type="PANTHER" id="PTHR48099">
    <property type="entry name" value="C-1-TETRAHYDROFOLATE SYNTHASE, CYTOPLASMIC-RELATED"/>
    <property type="match status" value="1"/>
</dbReference>
<dbReference type="Pfam" id="PF00763">
    <property type="entry name" value="THF_DHG_CYH"/>
    <property type="match status" value="1"/>
</dbReference>
<dbReference type="Pfam" id="PF02882">
    <property type="entry name" value="THF_DHG_CYH_C"/>
    <property type="match status" value="1"/>
</dbReference>
<dbReference type="PRINTS" id="PR00085">
    <property type="entry name" value="THFDHDRGNASE"/>
</dbReference>
<dbReference type="SUPFAM" id="SSF53223">
    <property type="entry name" value="Aminoacid dehydrogenase-like, N-terminal domain"/>
    <property type="match status" value="1"/>
</dbReference>
<dbReference type="SUPFAM" id="SSF51735">
    <property type="entry name" value="NAD(P)-binding Rossmann-fold domains"/>
    <property type="match status" value="1"/>
</dbReference>
<dbReference type="PROSITE" id="PS00767">
    <property type="entry name" value="THF_DHG_CYH_2"/>
    <property type="match status" value="1"/>
</dbReference>